<sequence length="578" mass="62241">MTTGGLVDENDGAAMRPLRHTLSQLRLHELLVEVQDRVEQIVEGRDRLDGLVEAMLVVTAGLDLEATLRAIVHSATSLVDARYGAMEVHDRQHRVLHFVYEGIDEETVRRIGHLPKGLGVIGLLIEDPKPLRLDDVSAHPASIGFPPYHPPMRTFLGVPVRVRDESFGTLYLTDKTNGQPFSDDDEVLVQALAAAAGIAVANARLYQQAKARQSWIEATRDIATELLSGTEPATVFRLVAAEALKLTAADAALVAVPVDEDMPAADVGELLVIETVGSAVASIVGRTIPVAGAVLREVFVNGIPRRVDRVDLEGLDELADAGPALLLPLRARGTVAGVVVVLSQGGPGAFTDEQLEMMAAFADQAALAWQLATSQRRMRELDVLTDRDRIARDLHDHVIQRLFAIGLALQGAVPHERNPEVQQRLSDVVDDLQDVIQEIRTTIYDLHGASQGITRLRQRIDAAVAQFADSGLRTSVQFVGPLSVVDSALADQAEAVVREAVSNAVRHAKASTLTVRVKVDDDLCIEVTDNGRGLPDEFTGSGLTNLRQRAEQAGGEFTLASVPGASGTVLRWSAPLSQ</sequence>
<protein>
    <recommendedName>
        <fullName evidence="23">Oxygen sensor histidine kinase response regulator DevS/DosS</fullName>
        <ecNumber evidence="5">2.7.13.3</ecNumber>
    </recommendedName>
</protein>
<dbReference type="EC" id="2.7.13.3" evidence="5"/>
<dbReference type="EMBL" id="AL123456">
    <property type="protein sequence ID" value="CCP45942.1"/>
    <property type="molecule type" value="Genomic_DNA"/>
</dbReference>
<dbReference type="EMBL" id="U22037">
    <property type="protein sequence ID" value="AAD17453.1"/>
    <property type="molecule type" value="Genomic_DNA"/>
</dbReference>
<dbReference type="PIR" id="E70645">
    <property type="entry name" value="E70645"/>
</dbReference>
<dbReference type="RefSeq" id="NP_217648.1">
    <property type="nucleotide sequence ID" value="NC_000962.3"/>
</dbReference>
<dbReference type="RefSeq" id="WP_003899933.1">
    <property type="nucleotide sequence ID" value="NZ_NVQJ01000019.1"/>
</dbReference>
<dbReference type="PDB" id="2W3D">
    <property type="method" value="X-ray"/>
    <property type="resolution" value="2.00 A"/>
    <property type="chains" value="A/B=63-210"/>
</dbReference>
<dbReference type="PDB" id="2W3E">
    <property type="method" value="X-ray"/>
    <property type="resolution" value="1.60 A"/>
    <property type="chains" value="A/B=63-210"/>
</dbReference>
<dbReference type="PDB" id="2W3F">
    <property type="method" value="X-ray"/>
    <property type="resolution" value="1.60 A"/>
    <property type="chains" value="A/B=63-210"/>
</dbReference>
<dbReference type="PDB" id="2W3G">
    <property type="method" value="X-ray"/>
    <property type="resolution" value="1.40 A"/>
    <property type="chains" value="A/B=63-210"/>
</dbReference>
<dbReference type="PDB" id="2W3H">
    <property type="method" value="X-ray"/>
    <property type="resolution" value="1.80 A"/>
    <property type="chains" value="A/B=63-210"/>
</dbReference>
<dbReference type="PDB" id="2Y79">
    <property type="method" value="X-ray"/>
    <property type="resolution" value="1.80 A"/>
    <property type="chains" value="A/B=63-210"/>
</dbReference>
<dbReference type="PDB" id="2Y8H">
    <property type="method" value="X-ray"/>
    <property type="resolution" value="1.90 A"/>
    <property type="chains" value="A/B=63-210"/>
</dbReference>
<dbReference type="PDB" id="3ZXO">
    <property type="method" value="X-ray"/>
    <property type="resolution" value="1.90 A"/>
    <property type="chains" value="A/B=454-578"/>
</dbReference>
<dbReference type="PDB" id="4YNR">
    <property type="method" value="X-ray"/>
    <property type="resolution" value="1.92 A"/>
    <property type="chains" value="A/B=63-210"/>
</dbReference>
<dbReference type="PDB" id="4YOF">
    <property type="method" value="X-ray"/>
    <property type="resolution" value="1.90 A"/>
    <property type="chains" value="A/B=63-210"/>
</dbReference>
<dbReference type="PDB" id="8SBM">
    <property type="method" value="X-ray"/>
    <property type="resolution" value="1.47 A"/>
    <property type="chains" value="A/B=454-578"/>
</dbReference>
<dbReference type="PDBsum" id="2W3D"/>
<dbReference type="PDBsum" id="2W3E"/>
<dbReference type="PDBsum" id="2W3F"/>
<dbReference type="PDBsum" id="2W3G"/>
<dbReference type="PDBsum" id="2W3H"/>
<dbReference type="PDBsum" id="2Y79"/>
<dbReference type="PDBsum" id="2Y8H"/>
<dbReference type="PDBsum" id="3ZXO"/>
<dbReference type="PDBsum" id="4YNR"/>
<dbReference type="PDBsum" id="4YOF"/>
<dbReference type="PDBsum" id="8SBM"/>
<dbReference type="SMR" id="P9WGK3"/>
<dbReference type="FunCoup" id="P9WGK3">
    <property type="interactions" value="57"/>
</dbReference>
<dbReference type="IntAct" id="P9WGK3">
    <property type="interactions" value="1"/>
</dbReference>
<dbReference type="STRING" id="83332.Rv3132c"/>
<dbReference type="iPTMnet" id="P9WGK3"/>
<dbReference type="PaxDb" id="83332-Rv3132c"/>
<dbReference type="DNASU" id="888829"/>
<dbReference type="GeneID" id="888829"/>
<dbReference type="KEGG" id="mtu:Rv3132c"/>
<dbReference type="KEGG" id="mtv:RVBD_3132c"/>
<dbReference type="TubercuList" id="Rv3132c"/>
<dbReference type="eggNOG" id="COG2203">
    <property type="taxonomic scope" value="Bacteria"/>
</dbReference>
<dbReference type="eggNOG" id="COG4585">
    <property type="taxonomic scope" value="Bacteria"/>
</dbReference>
<dbReference type="InParanoid" id="P9WGK3"/>
<dbReference type="OrthoDB" id="5241249at2"/>
<dbReference type="PhylomeDB" id="P9WGK3"/>
<dbReference type="EvolutionaryTrace" id="P9WGK3"/>
<dbReference type="Proteomes" id="UP000001584">
    <property type="component" value="Chromosome"/>
</dbReference>
<dbReference type="GO" id="GO:0005737">
    <property type="term" value="C:cytoplasm"/>
    <property type="evidence" value="ECO:0007669"/>
    <property type="project" value="UniProtKB-SubCell"/>
</dbReference>
<dbReference type="GO" id="GO:0009274">
    <property type="term" value="C:peptidoglycan-based cell wall"/>
    <property type="evidence" value="ECO:0007005"/>
    <property type="project" value="MTBBASE"/>
</dbReference>
<dbReference type="GO" id="GO:0005886">
    <property type="term" value="C:plasma membrane"/>
    <property type="evidence" value="ECO:0007005"/>
    <property type="project" value="MTBBASE"/>
</dbReference>
<dbReference type="GO" id="GO:0005524">
    <property type="term" value="F:ATP binding"/>
    <property type="evidence" value="ECO:0000314"/>
    <property type="project" value="MTBBASE"/>
</dbReference>
<dbReference type="GO" id="GO:0070025">
    <property type="term" value="F:carbon monoxide binding"/>
    <property type="evidence" value="ECO:0000314"/>
    <property type="project" value="MTBBASE"/>
</dbReference>
<dbReference type="GO" id="GO:0020037">
    <property type="term" value="F:heme binding"/>
    <property type="evidence" value="ECO:0000314"/>
    <property type="project" value="MTBBASE"/>
</dbReference>
<dbReference type="GO" id="GO:0000287">
    <property type="term" value="F:magnesium ion binding"/>
    <property type="evidence" value="ECO:0000314"/>
    <property type="project" value="MTBBASE"/>
</dbReference>
<dbReference type="GO" id="GO:0070026">
    <property type="term" value="F:nitric oxide binding"/>
    <property type="evidence" value="ECO:0000314"/>
    <property type="project" value="MTBBASE"/>
</dbReference>
<dbReference type="GO" id="GO:0019825">
    <property type="term" value="F:oxygen binding"/>
    <property type="evidence" value="ECO:0000314"/>
    <property type="project" value="MTBBASE"/>
</dbReference>
<dbReference type="GO" id="GO:0019826">
    <property type="term" value="F:oxygen sensor activity"/>
    <property type="evidence" value="ECO:0000314"/>
    <property type="project" value="MTBBASE"/>
</dbReference>
<dbReference type="GO" id="GO:0000155">
    <property type="term" value="F:phosphorelay sensor kinase activity"/>
    <property type="evidence" value="ECO:0000314"/>
    <property type="project" value="UniProtKB"/>
</dbReference>
<dbReference type="GO" id="GO:0046983">
    <property type="term" value="F:protein dimerization activity"/>
    <property type="evidence" value="ECO:0007669"/>
    <property type="project" value="InterPro"/>
</dbReference>
<dbReference type="GO" id="GO:0004672">
    <property type="term" value="F:protein kinase activity"/>
    <property type="evidence" value="ECO:0000314"/>
    <property type="project" value="MTBBASE"/>
</dbReference>
<dbReference type="GO" id="GO:0070483">
    <property type="term" value="P:detection of hypoxia"/>
    <property type="evidence" value="ECO:0000314"/>
    <property type="project" value="UniProtKB"/>
</dbReference>
<dbReference type="GO" id="GO:0051776">
    <property type="term" value="P:detection of redox state"/>
    <property type="evidence" value="ECO:0000314"/>
    <property type="project" value="MTBBASE"/>
</dbReference>
<dbReference type="GO" id="GO:0051775">
    <property type="term" value="P:response to redox state"/>
    <property type="evidence" value="ECO:0000314"/>
    <property type="project" value="MTBBASE"/>
</dbReference>
<dbReference type="CDD" id="cd16917">
    <property type="entry name" value="HATPase_UhpB-NarQ-NarX-like"/>
    <property type="match status" value="1"/>
</dbReference>
<dbReference type="FunFam" id="3.30.450.40:FF:000052">
    <property type="entry name" value="Oxygen sensor histidine kinase response regulator DevS/DosS"/>
    <property type="match status" value="1"/>
</dbReference>
<dbReference type="FunFam" id="3.30.565.10:FF:000146">
    <property type="entry name" value="Oxygen sensor histidine kinase response regulator DevS/DosS"/>
    <property type="match status" value="1"/>
</dbReference>
<dbReference type="FunFam" id="1.20.5.1930:FF:000006">
    <property type="entry name" value="Two component sensor histidine kinase"/>
    <property type="match status" value="1"/>
</dbReference>
<dbReference type="Gene3D" id="1.20.5.1930">
    <property type="match status" value="1"/>
</dbReference>
<dbReference type="Gene3D" id="3.30.450.40">
    <property type="match status" value="2"/>
</dbReference>
<dbReference type="Gene3D" id="3.30.565.10">
    <property type="entry name" value="Histidine kinase-like ATPase, C-terminal domain"/>
    <property type="match status" value="1"/>
</dbReference>
<dbReference type="InterPro" id="IPR003018">
    <property type="entry name" value="GAF"/>
</dbReference>
<dbReference type="InterPro" id="IPR029016">
    <property type="entry name" value="GAF-like_dom_sf"/>
</dbReference>
<dbReference type="InterPro" id="IPR036890">
    <property type="entry name" value="HATPase_C_sf"/>
</dbReference>
<dbReference type="InterPro" id="IPR005467">
    <property type="entry name" value="His_kinase_dom"/>
</dbReference>
<dbReference type="InterPro" id="IPR050482">
    <property type="entry name" value="Sensor_HK_TwoCompSys"/>
</dbReference>
<dbReference type="InterPro" id="IPR011712">
    <property type="entry name" value="Sig_transdc_His_kin_sub3_dim/P"/>
</dbReference>
<dbReference type="PANTHER" id="PTHR24421">
    <property type="entry name" value="NITRATE/NITRITE SENSOR PROTEIN NARX-RELATED"/>
    <property type="match status" value="1"/>
</dbReference>
<dbReference type="PANTHER" id="PTHR24421:SF56">
    <property type="entry name" value="OXYGEN SENSOR HISTIDINE KINASE RESPONSE REGULATOR DOST"/>
    <property type="match status" value="1"/>
</dbReference>
<dbReference type="Pfam" id="PF13185">
    <property type="entry name" value="GAF_2"/>
    <property type="match status" value="2"/>
</dbReference>
<dbReference type="Pfam" id="PF02518">
    <property type="entry name" value="HATPase_c"/>
    <property type="match status" value="1"/>
</dbReference>
<dbReference type="Pfam" id="PF07730">
    <property type="entry name" value="HisKA_3"/>
    <property type="match status" value="1"/>
</dbReference>
<dbReference type="SMART" id="SM00065">
    <property type="entry name" value="GAF"/>
    <property type="match status" value="2"/>
</dbReference>
<dbReference type="SMART" id="SM00387">
    <property type="entry name" value="HATPase_c"/>
    <property type="match status" value="1"/>
</dbReference>
<dbReference type="SUPFAM" id="SSF55874">
    <property type="entry name" value="ATPase domain of HSP90 chaperone/DNA topoisomerase II/histidine kinase"/>
    <property type="match status" value="1"/>
</dbReference>
<dbReference type="SUPFAM" id="SSF55781">
    <property type="entry name" value="GAF domain-like"/>
    <property type="match status" value="2"/>
</dbReference>
<dbReference type="PROSITE" id="PS50109">
    <property type="entry name" value="HIS_KIN"/>
    <property type="match status" value="1"/>
</dbReference>
<reference key="1">
    <citation type="journal article" date="1998" name="Nature">
        <title>Deciphering the biology of Mycobacterium tuberculosis from the complete genome sequence.</title>
        <authorList>
            <person name="Cole S.T."/>
            <person name="Brosch R."/>
            <person name="Parkhill J."/>
            <person name="Garnier T."/>
            <person name="Churcher C.M."/>
            <person name="Harris D.E."/>
            <person name="Gordon S.V."/>
            <person name="Eiglmeier K."/>
            <person name="Gas S."/>
            <person name="Barry C.E. III"/>
            <person name="Tekaia F."/>
            <person name="Badcock K."/>
            <person name="Basham D."/>
            <person name="Brown D."/>
            <person name="Chillingworth T."/>
            <person name="Connor R."/>
            <person name="Davies R.M."/>
            <person name="Devlin K."/>
            <person name="Feltwell T."/>
            <person name="Gentles S."/>
            <person name="Hamlin N."/>
            <person name="Holroyd S."/>
            <person name="Hornsby T."/>
            <person name="Jagels K."/>
            <person name="Krogh A."/>
            <person name="McLean J."/>
            <person name="Moule S."/>
            <person name="Murphy L.D."/>
            <person name="Oliver S."/>
            <person name="Osborne J."/>
            <person name="Quail M.A."/>
            <person name="Rajandream M.A."/>
            <person name="Rogers J."/>
            <person name="Rutter S."/>
            <person name="Seeger K."/>
            <person name="Skelton S."/>
            <person name="Squares S."/>
            <person name="Squares R."/>
            <person name="Sulston J.E."/>
            <person name="Taylor K."/>
            <person name="Whitehead S."/>
            <person name="Barrell B.G."/>
        </authorList>
    </citation>
    <scope>NUCLEOTIDE SEQUENCE [LARGE SCALE GENOMIC DNA]</scope>
    <source>
        <strain>ATCC 25618 / H37Rv</strain>
    </source>
</reference>
<reference key="2">
    <citation type="journal article" date="2000" name="Tuber. Lung Dis.">
        <title>Characterization of a two-component system, devR-devS, of Mycobacterium tuberculosis.</title>
        <authorList>
            <person name="Dasgupta N."/>
            <person name="Kapur V."/>
            <person name="Singh K.K."/>
            <person name="Das T.K."/>
            <person name="Sachdeva S."/>
            <person name="Jyothisri K."/>
            <person name="Tyagi J.S."/>
        </authorList>
    </citation>
    <scope>NUCLEOTIDE SEQUENCE [GENOMIC DNA] OF 1-116</scope>
    <scope>OPERON STRUCTURE</scope>
    <source>
        <strain>ATCC 25618 / H37Rv</strain>
    </source>
</reference>
<reference key="3">
    <citation type="journal article" date="2001" name="Proc. Natl. Acad. Sci. U.S.A.">
        <title>Regulation of the Mycobacterium tuberculosis hypoxic response gene encoding alpha -crystallin.</title>
        <authorList>
            <person name="Sherman D.R."/>
            <person name="Voskuil M."/>
            <person name="Schnappinger D."/>
            <person name="Liao R."/>
            <person name="Harrell M.I."/>
            <person name="Schoolnik G.K."/>
        </authorList>
    </citation>
    <scope>FUNCTION</scope>
    <scope>REGULON</scope>
    <scope>INDUCTION BY HYPOXIA</scope>
    <scope>DISRUPTION PHENOTYPE</scope>
    <source>
        <strain>ATCC 25618 / H37Rv</strain>
    </source>
</reference>
<reference key="4">
    <citation type="journal article" date="2003" name="J. Exp. Med.">
        <title>Inhibition of respiration by nitric oxide induces a Mycobacterium tuberculosis dormancy program.</title>
        <authorList>
            <person name="Voskuil M.I."/>
            <person name="Schnappinger D."/>
            <person name="Visconti K.C."/>
            <person name="Harrell M.I."/>
            <person name="Dolganov G.M."/>
            <person name="Sherman D.R."/>
            <person name="Schoolnik G.K."/>
        </authorList>
    </citation>
    <scope>FUNCTION</scope>
    <scope>INDUCTION BY NITRIC OXIDE (NO) AND BY HYPOXIA</scope>
    <scope>DORMANCY REGULON</scope>
    <source>
        <strain>ATCC 25618 / H37Rv</strain>
    </source>
</reference>
<reference key="5">
    <citation type="journal article" date="2004" name="J. Biol. Chem.">
        <title>Two sensor kinases contribute to the hypoxic response of Mycobacterium tuberculosis.</title>
        <authorList>
            <person name="Roberts D.M."/>
            <person name="Liao R.P."/>
            <person name="Wisedchaisri G."/>
            <person name="Hol W.G."/>
            <person name="Sherman D.R."/>
        </authorList>
    </citation>
    <scope>FUNCTION</scope>
    <scope>CATALYTIC ACTIVITY</scope>
    <scope>REGULON</scope>
    <scope>PHOSPHORYLATION AT HIS-395</scope>
    <scope>AUTOPHOSPHORYLATION</scope>
    <scope>DISRUPTION PHENOTYPE</scope>
    <scope>MUTAGENESIS OF 395-HIS--HIS-397</scope>
    <source>
        <strain>ATCC 25618 / H37Rv</strain>
    </source>
</reference>
<reference key="6">
    <citation type="journal article" date="2004" name="Microbiology">
        <title>DevR-DevS is a bona fide two-component system of Mycobacterium tuberculosis that is hypoxia-responsive in the absence of the DNA-binding domain of DevR.</title>
        <authorList>
            <person name="Saini D.K."/>
            <person name="Malhotra V."/>
            <person name="Dey D."/>
            <person name="Pant N."/>
            <person name="Das T.K."/>
            <person name="Tyagi J.S."/>
        </authorList>
    </citation>
    <scope>FUNCTION</scope>
    <scope>CATALYTIC ACTIVITY</scope>
    <scope>PHOSPHORYLATION AT HIS-395</scope>
    <scope>AUTOPHOSPHORYLATION</scope>
    <scope>COFACTOR</scope>
    <scope>MUTAGENESIS OF HIS-395; HIS-397 AND ASN-503</scope>
    <source>
        <strain>ATCC 25618 / H37Rv</strain>
    </source>
</reference>
<reference key="7">
    <citation type="journal article" date="2005" name="J. Mol. Biol.">
        <title>A GAF domain in the hypoxia/NO-inducible Mycobacterium tuberculosis DosS protein binds haem.</title>
        <authorList>
            <person name="Sardiwal S."/>
            <person name="Kendall S.L."/>
            <person name="Movahedzadeh F."/>
            <person name="Rison S.C."/>
            <person name="Stoker N.G."/>
            <person name="Djordjevic S."/>
        </authorList>
    </citation>
    <scope>HEME COFACTOR</scope>
    <scope>SUBCELLULAR LOCATION</scope>
    <scope>MUTAGENESIS OF HIS-139 AND HIS-149</scope>
</reference>
<reference key="8">
    <citation type="journal article" date="2007" name="Biochemistry">
        <title>DevS, a heme-containing two-component oxygen sensor of Mycobacterium tuberculosis.</title>
        <authorList>
            <person name="Ioanoviciu A."/>
            <person name="Yukl E.T."/>
            <person name="Moenne-Loccoz P."/>
            <person name="de Montellano P.R."/>
        </authorList>
    </citation>
    <scope>FUNCTION AS AN OXYGEN SENSOR</scope>
    <scope>HEME COFACTOR</scope>
    <scope>BINDING OF CN; N(3); CO; O(2) AND NO</scope>
    <scope>MUTAGENESIS OF HIS-149</scope>
    <source>
        <strain>ATCC 25618 / H37Rv</strain>
    </source>
</reference>
<reference key="9">
    <citation type="journal article" date="2007" name="Proc. Natl. Acad. Sci. U.S.A.">
        <title>Mycobacterium tuberculosis DosS is a redox sensor and DosT is a hypoxia sensor.</title>
        <authorList>
            <person name="Kumar A."/>
            <person name="Toledo J.C."/>
            <person name="Patel R.P."/>
            <person name="Lancaster J.R. Jr."/>
            <person name="Steyn A.J."/>
        </authorList>
    </citation>
    <scope>FUNCTION AS A REDOX SENSOR</scope>
    <scope>LIGAND-BINDING</scope>
    <scope>HEME COFACTOR</scope>
    <source>
        <strain>ATCC 25618 / H37Rv</strain>
    </source>
</reference>
<reference key="10">
    <citation type="journal article" date="2007" name="Protein Sci.">
        <title>DosT and DevS are oxygen-switched kinases in Mycobacterium tuberculosis.</title>
        <authorList>
            <person name="Sousa E.H."/>
            <person name="Tuckerman J.R."/>
            <person name="Gonzalez G."/>
            <person name="Gilles-Gonzalez M.A."/>
        </authorList>
    </citation>
    <scope>FUNCTION AS AN OXYGEN SENSOR</scope>
    <scope>HEME COFACTOR</scope>
    <scope>COFACTOR</scope>
    <scope>BIOPHYSICOCHEMICAL PROPERTIES</scope>
    <scope>SUBCELLULAR LOCATION</scope>
    <scope>LIGAND-BINDING</scope>
    <source>
        <strain>ATCC 25618 / H37Rv</strain>
    </source>
</reference>
<reference key="11">
    <citation type="journal article" date="2008" name="Biochemistry">
        <title>A distal tyrosine residue is required for ligand discrimination in DevS from Mycobacterium tuberculosis.</title>
        <authorList>
            <person name="Yukl E.T."/>
            <person name="Ioanoviciu A."/>
            <person name="Nakano M.M."/>
            <person name="de Montellano P.R."/>
            <person name="Moenne-Loccoz P."/>
        </authorList>
    </citation>
    <scope>FUNCTION</scope>
    <scope>MUTAGENESIS OF TYR-171</scope>
    <scope>LIGAND-BINDING</scope>
</reference>
<reference key="12">
    <citation type="journal article" date="2008" name="BMC Syst. Biol.">
        <title>targetTB: a target identification pipeline for Mycobacterium tuberculosis through an interactome, reactome and genome-scale structural analysis.</title>
        <authorList>
            <person name="Raman K."/>
            <person name="Yeturu K."/>
            <person name="Chandra N."/>
        </authorList>
    </citation>
    <scope>IDENTIFICATION AS A DRUG TARGET [LARGE SCALE ANALYSIS]</scope>
</reference>
<reference key="13">
    <citation type="journal article" date="2008" name="Cell Host Microbe">
        <title>Mycobacterium tuberculosis senses host-derived carbon monoxide during macrophage infection.</title>
        <authorList>
            <person name="Shiloh M.U."/>
            <person name="Manzanillo P."/>
            <person name="Cox J.S."/>
        </authorList>
    </citation>
    <scope>FUNCTION IN CARBON MONOXIDE (CO) RESPONSE</scope>
    <scope>DISRUPTION PHENOTYPE</scope>
    <source>
        <strain>ATCC 25618 / H37Rv</strain>
    </source>
</reference>
<reference key="14">
    <citation type="journal article" date="2008" name="J. Biol. Chem.">
        <title>Heme oxygenase-1-derived carbon monoxide induces the Mycobacterium tuberculosis dormancy regulon.</title>
        <authorList>
            <person name="Kumar A."/>
            <person name="Deshane J.S."/>
            <person name="Crossman D.K."/>
            <person name="Bolisetty S."/>
            <person name="Yan B.S."/>
            <person name="Kramnik I."/>
            <person name="Agarwal A."/>
            <person name="Steyn A.J."/>
        </authorList>
    </citation>
    <scope>INDUCTION BY CARBON MONOXIDE (CO)</scope>
    <scope>DISRUPTION PHENOTYPE</scope>
    <scope>ROLE IN DORMANCY REGULON</scope>
    <source>
        <strain>ATCC 25618 / H37Rv</strain>
    </source>
</reference>
<reference key="15">
    <citation type="journal article" date="2009" name="Biochemistry">
        <title>DevS oxy complex stability identifies this heme protein as a gas sensor in Mycobacterium tuberculosis dormancy.</title>
        <authorList>
            <person name="Ioanoviciu A."/>
            <person name="Meharenna Y.T."/>
            <person name="Poulos T.L."/>
            <person name="Ortiz de Montellano P.R."/>
        </authorList>
    </citation>
    <scope>FUNCTION</scope>
    <scope>HEME COFACTOR</scope>
    <scope>DOMAIN</scope>
    <scope>MUTAGENESIS OF TYR-171</scope>
</reference>
<reference key="16">
    <citation type="journal article" date="2009" name="Infect. Immun.">
        <title>Unique roles of DosT and DosS in DosR regulon induction and Mycobacterium tuberculosis dormancy.</title>
        <authorList>
            <person name="Honaker R.W."/>
            <person name="Leistikow R.L."/>
            <person name="Bartek I.L."/>
            <person name="Voskuil M.I."/>
        </authorList>
    </citation>
    <scope>FUNCTION</scope>
    <scope>INDUCTION</scope>
    <scope>DISRUPTION PHENOTYPE</scope>
    <source>
        <strain>H37Rv</strain>
    </source>
</reference>
<reference key="17">
    <citation type="journal article" date="2011" name="Mol. Cell. Proteomics">
        <title>Proteogenomic analysis of Mycobacterium tuberculosis by high resolution mass spectrometry.</title>
        <authorList>
            <person name="Kelkar D.S."/>
            <person name="Kumar D."/>
            <person name="Kumar P."/>
            <person name="Balakrishnan L."/>
            <person name="Muthusamy B."/>
            <person name="Yadav A.K."/>
            <person name="Shrivastava P."/>
            <person name="Marimuthu A."/>
            <person name="Anand S."/>
            <person name="Sundaram H."/>
            <person name="Kingsbury R."/>
            <person name="Harsha H.C."/>
            <person name="Nair B."/>
            <person name="Prasad T.S."/>
            <person name="Chauhan D.S."/>
            <person name="Katoch K."/>
            <person name="Katoch V.M."/>
            <person name="Kumar P."/>
            <person name="Chaerkady R."/>
            <person name="Ramachandran S."/>
            <person name="Dash D."/>
            <person name="Pandey A."/>
        </authorList>
    </citation>
    <scope>ACETYLATION [LARGE SCALE ANALYSIS] AT THR-2</scope>
    <scope>CLEAVAGE OF INITIATOR METHIONINE [LARGE SCALE ANALYSIS]</scope>
    <scope>IDENTIFICATION BY MASS SPECTROMETRY [LARGE SCALE ANALYSIS]</scope>
    <source>
        <strain>ATCC 25618 / H37Rv</strain>
    </source>
</reference>
<reference key="18">
    <citation type="journal article" date="2016" name="J. Biol. Chem.">
        <title>Distal hydrogen-bonding interactions in ligand sensing and signaling by Mycobacterium tuberculosis DosS.</title>
        <authorList>
            <person name="Basudhar D."/>
            <person name="Madrona Y."/>
            <person name="Yukl E.T."/>
            <person name="Sivaramakrishnan S."/>
            <person name="Nishida C.R."/>
            <person name="Moenne-Loccoz P."/>
            <person name="Ortiz de Montellano P.R."/>
        </authorList>
    </citation>
    <scope>FUNCTION</scope>
    <scope>MUTAGENESIS OF GLU-87; HIS-89 AND ARG-204</scope>
    <scope>LIGAND-BINDING</scope>
    <source>
        <strain>H37Rv</strain>
    </source>
</reference>
<reference key="19">
    <citation type="journal article" date="2017" name="FEBS J.">
        <title>Target DNA stabilizes Mycobacterium tuberculosis DevR/DosR phosphorylation by the full-length oxygen sensors DevS/DosS and DosT.</title>
        <authorList>
            <person name="Sousa E.H.S."/>
            <person name="Gonzalez G."/>
            <person name="Gilles-Gonzalez M.A."/>
        </authorList>
    </citation>
    <scope>FUNCTION</scope>
    <source>
        <strain>H37Rv</strain>
    </source>
</reference>
<reference key="20">
    <citation type="journal article" date="2013" name="Biosensors">
        <title>The DosS-DosT/DosR mycobacterial sensor system.</title>
        <authorList>
            <person name="Sivaramakrishnan S."/>
            <person name="de Montellano P.R."/>
        </authorList>
    </citation>
    <scope>REVIEW</scope>
</reference>
<reference evidence="33 34 35 36 37" key="21">
    <citation type="journal article" date="2009" name="J. Biol. Chem.">
        <title>Structural insight into the heme-based redox sensing by DosS from Mycobacterium tuberculosis.</title>
        <authorList>
            <person name="Cho H.Y."/>
            <person name="Cho H.J."/>
            <person name="Kim Y.M."/>
            <person name="Oh J.I."/>
            <person name="Kang B.S."/>
        </authorList>
    </citation>
    <scope>X-RAY CRYSTALLOGRAPHY (1.4 ANGSTROMS) OF 63-210 IN HEME-BOUND; REDUCED; OXIDIZED AND CYANIDE-BOUND FORMS</scope>
    <scope>REDUCTION BY FLAVIN NUCLEOTIDES</scope>
    <source>
        <strain>ATCC 25618 / H37Rv</strain>
    </source>
</reference>
<reference evidence="38 39" key="22">
    <citation type="journal article" date="2011" name="FEBS Lett.">
        <title>Blockage of the channel to heme by the E87 side chain in the GAF domain of Mycobacterium tuberculosis DosS confers the unique sensitivity of DosS to oxygen.</title>
        <authorList>
            <person name="Cho H.Y."/>
            <person name="Cho H.J."/>
            <person name="Kim M.H."/>
            <person name="Kang B.S."/>
        </authorList>
    </citation>
    <scope>X-RAY CRYSTALLOGRAPHY (1.80 ANGSTROMS) OF 63-210 IN COMPLEX WITH HEME</scope>
    <source>
        <strain>H37Rv</strain>
    </source>
</reference>
<reference evidence="40" key="23">
    <citation type="journal article" date="2013" name="J. Biol. Chem.">
        <title>Activation of ATP binding for the autophosphorylation of DosS, a Mycobacterium tuberculosis histidine kinase lacking an ATP lid motif.</title>
        <authorList>
            <person name="Cho H.Y."/>
            <person name="Lee Y.H."/>
            <person name="Bae Y.S."/>
            <person name="Kim E."/>
            <person name="Kang B.S."/>
        </authorList>
    </citation>
    <scope>X-RAY CRYSTALLOGRAPHY (1.90 ANGSTROMS) OF 454-578 IN COMPLEX WITH ZINC</scope>
    <scope>SUBUNIT</scope>
    <scope>DOMAIN</scope>
    <scope>MUTAGENESIS OF HIS-395; ARG-440; CYS-524 AND GLU-537</scope>
    <scope>ATP-BINDING</scope>
    <source>
        <strain>H37Rv</strain>
    </source>
</reference>
<reference evidence="41 42" key="24">
    <citation type="journal article" date="2016" name="Arch. Biochem. Biophys.">
        <title>Crystal structures of the CO- and NO-bound DosS GAF-A domain and implications for DosS signaling in Mycobacterium tuberculosis.</title>
        <authorList>
            <person name="Madrona Y."/>
            <person name="Waddling C.A."/>
            <person name="Ortiz de Montellano P.R."/>
        </authorList>
    </citation>
    <scope>X-RAY CRYSTALLOGRAPHY (1.90 ANGSTROMS) OF 63-210 IN COMPLEX WITH HEME AND CO OR NO</scope>
</reference>
<evidence type="ECO:0000255" key="1">
    <source>
        <dbReference type="PROSITE-ProRule" id="PRU00107"/>
    </source>
</evidence>
<evidence type="ECO:0000269" key="2">
    <source>
    </source>
</evidence>
<evidence type="ECO:0000269" key="3">
    <source>
    </source>
</evidence>
<evidence type="ECO:0000269" key="4">
    <source>
    </source>
</evidence>
<evidence type="ECO:0000269" key="5">
    <source>
    </source>
</evidence>
<evidence type="ECO:0000269" key="6">
    <source>
    </source>
</evidence>
<evidence type="ECO:0000269" key="7">
    <source>
    </source>
</evidence>
<evidence type="ECO:0000269" key="8">
    <source>
    </source>
</evidence>
<evidence type="ECO:0000269" key="9">
    <source>
    </source>
</evidence>
<evidence type="ECO:0000269" key="10">
    <source>
    </source>
</evidence>
<evidence type="ECO:0000269" key="11">
    <source>
    </source>
</evidence>
<evidence type="ECO:0000269" key="12">
    <source>
    </source>
</evidence>
<evidence type="ECO:0000269" key="13">
    <source>
    </source>
</evidence>
<evidence type="ECO:0000269" key="14">
    <source>
    </source>
</evidence>
<evidence type="ECO:0000269" key="15">
    <source>
    </source>
</evidence>
<evidence type="ECO:0000269" key="16">
    <source>
    </source>
</evidence>
<evidence type="ECO:0000269" key="17">
    <source>
    </source>
</evidence>
<evidence type="ECO:0000269" key="18">
    <source>
    </source>
</evidence>
<evidence type="ECO:0000269" key="19">
    <source>
    </source>
</evidence>
<evidence type="ECO:0000269" key="20">
    <source>
    </source>
</evidence>
<evidence type="ECO:0000269" key="21">
    <source>
    </source>
</evidence>
<evidence type="ECO:0000303" key="22">
    <source>
    </source>
</evidence>
<evidence type="ECO:0000303" key="23">
    <source>
    </source>
</evidence>
<evidence type="ECO:0000305" key="24">
    <source>
    </source>
</evidence>
<evidence type="ECO:0000305" key="25">
    <source>
    </source>
</evidence>
<evidence type="ECO:0000305" key="26">
    <source>
    </source>
</evidence>
<evidence type="ECO:0000305" key="27">
    <source>
    </source>
</evidence>
<evidence type="ECO:0000305" key="28">
    <source>
    </source>
</evidence>
<evidence type="ECO:0000305" key="29">
    <source>
    </source>
</evidence>
<evidence type="ECO:0000305" key="30">
    <source>
    </source>
</evidence>
<evidence type="ECO:0000305" key="31">
    <source>
    </source>
</evidence>
<evidence type="ECO:0000305" key="32">
    <source>
    </source>
</evidence>
<evidence type="ECO:0007744" key="33">
    <source>
        <dbReference type="PDB" id="2W3D"/>
    </source>
</evidence>
<evidence type="ECO:0007744" key="34">
    <source>
        <dbReference type="PDB" id="2W3E"/>
    </source>
</evidence>
<evidence type="ECO:0007744" key="35">
    <source>
        <dbReference type="PDB" id="2W3F"/>
    </source>
</evidence>
<evidence type="ECO:0007744" key="36">
    <source>
        <dbReference type="PDB" id="2W3G"/>
    </source>
</evidence>
<evidence type="ECO:0007744" key="37">
    <source>
        <dbReference type="PDB" id="2W3H"/>
    </source>
</evidence>
<evidence type="ECO:0007744" key="38">
    <source>
        <dbReference type="PDB" id="2Y79"/>
    </source>
</evidence>
<evidence type="ECO:0007744" key="39">
    <source>
        <dbReference type="PDB" id="2Y8H"/>
    </source>
</evidence>
<evidence type="ECO:0007744" key="40">
    <source>
        <dbReference type="PDB" id="3ZXO"/>
    </source>
</evidence>
<evidence type="ECO:0007744" key="41">
    <source>
        <dbReference type="PDB" id="4YNR"/>
    </source>
</evidence>
<evidence type="ECO:0007744" key="42">
    <source>
        <dbReference type="PDB" id="4YOF"/>
    </source>
</evidence>
<evidence type="ECO:0007744" key="43">
    <source>
    </source>
</evidence>
<evidence type="ECO:0007829" key="44">
    <source>
        <dbReference type="PDB" id="2W3E"/>
    </source>
</evidence>
<evidence type="ECO:0007829" key="45">
    <source>
        <dbReference type="PDB" id="2W3G"/>
    </source>
</evidence>
<evidence type="ECO:0007829" key="46">
    <source>
        <dbReference type="PDB" id="3ZXO"/>
    </source>
</evidence>
<evidence type="ECO:0007829" key="47">
    <source>
        <dbReference type="PDB" id="8SBM"/>
    </source>
</evidence>
<proteinExistence type="evidence at protein level"/>
<keyword id="KW-0002">3D-structure</keyword>
<keyword id="KW-0007">Acetylation</keyword>
<keyword id="KW-0067">ATP-binding</keyword>
<keyword id="KW-0963">Cytoplasm</keyword>
<keyword id="KW-0349">Heme</keyword>
<keyword id="KW-0408">Iron</keyword>
<keyword id="KW-0418">Kinase</keyword>
<keyword id="KW-0460">Magnesium</keyword>
<keyword id="KW-0479">Metal-binding</keyword>
<keyword id="KW-0547">Nucleotide-binding</keyword>
<keyword id="KW-0597">Phosphoprotein</keyword>
<keyword id="KW-1185">Reference proteome</keyword>
<keyword id="KW-0677">Repeat</keyword>
<keyword id="KW-0808">Transferase</keyword>
<keyword id="KW-0902">Two-component regulatory system</keyword>
<comment type="function">
    <text evidence="3 4 5 6 8 9 10 11 12 13 15 16 19 21">Member of the two-component regulatory system DevR/DevS (DosR/DosS) involved in onset of the dormancy response (PubMed:12953092). Regulates an approximately 48-member regulon (PubMed:11416222, PubMed:12953092, PubMed:15033981, PubMed:18400743). Required for full induction of the DevR (DosR) regulon; acts later than DosT to positively regulate expression of the DevR regulon during adaptation to anaerobiosis (PubMed:19487478). Characterized as an oxygen sensor; O(2) acts as a switch, with O(2)-bound Fe(2+) protein inactive in autophosphorylation (PubMed:17371046, PubMed:17600145, PubMed:18975917, PubMed:19463006, PubMed:28977726). Has also been suggested to act as a redox sensor, or perhaps as a dual oxygen/redox sensor (PubMed:17609369). Autophosphorylates under anaerobic but not aerobic conditions, binding of NO or CO does not dramatically change the level of autophosphorylation of Fe(2+) protein, binding of O(2) inactivates kinase activity (PubMed:17600145, PubMed:18975917, PubMed:27235395). Binds O(2), NO, CO (PubMed:17371046, PubMed:17600145, PubMed:17609369, PubMed:18975917, PubMed:27235395). It is probably reduced by flavin nucleotides such as FMN and FAD (PubMed:19276084). May be the primary sensor for CO (PubMed:18400743). Donates a phosphate group to transcriptional regulator DevR (DosR) (PubMed:15033981, PubMed:15073296, PubMed:28977726).</text>
</comment>
<comment type="catalytic activity">
    <reaction evidence="5">
        <text>ATP + protein L-histidine = ADP + protein N-phospho-L-histidine.</text>
        <dbReference type="EC" id="2.7.13.3"/>
    </reaction>
</comment>
<comment type="cofactor">
    <cofactor evidence="6 9">
        <name>Mg(2+)</name>
        <dbReference type="ChEBI" id="CHEBI:18420"/>
    </cofactor>
    <text evidence="9">Mn(2+) will also substitute in autophosphorylation assays, while Ca(2+) is a poor substitute (PubMed:17600145).</text>
</comment>
<comment type="cofactor">
    <cofactor evidence="7 8 9 15 17 20">
        <name>heme</name>
        <dbReference type="ChEBI" id="CHEBI:30413"/>
    </cofactor>
    <text evidence="7 8 9 17 20">Binds 1 heme group per monomer (PubMed:16213520, PubMed:17371046, PubMed:17600145, PubMed:21536032, PubMed:27729224).</text>
</comment>
<comment type="biophysicochemical properties">
    <kinetics>
        <KM evidence="9">73 uM for ATP for autophosphorylation by deoxy-DevS</KM>
    </kinetics>
</comment>
<comment type="subunit">
    <text evidence="18">The isolated histidine kinase core (HKC, residues 386-578) is a dimer and autophosphorylates, suggesting the protein may function as a homodimer (PubMed:23486471).</text>
</comment>
<comment type="subcellular location">
    <subcellularLocation>
        <location evidence="26 27">Cytoplasm</location>
    </subcellularLocation>
</comment>
<comment type="induction">
    <text evidence="2 3 4 11 16">A member of the dormancy regulon, expression is controlled by devR (PubMed:12953092, PubMed:19487478). Induced in response to reduced oxygen tension (hypoxia) (PubMed:11416222, PubMed:12953092, PubMed:19487478). Induced in response to low levels of nitric oxide (NO) and carbon monoxide (CO) (PubMed:12953092, PubMed:18400743). It is hoped that this regulon will give insight into the latent, or dormant phase of infection. Member of the Rv3134c-devR-devS operon (PubMed:10970762).</text>
</comment>
<comment type="domain">
    <text evidence="15 18">The first GAF domain protects the heme moiety from auto-oxidation, contributing to the full-length protein's very long half-life (more than 36 hours in buffers without transition metals) (PubMed:19463006). The isolated ATP-binding subdomain (residues 454-578) crystallized in a closed form that is unable to bind ATP, suggesting that ATP-binding requires conformational changes in this loop region; in this closed conformation it binds a zinc atom (PubMed:23486471). The isolated histidine kinase core (HKC, residues 386-578) both autophosphorylates and phosphorylates the isolated histidine acceptor subdomain (residues 386-452) (PubMed:23486471). The relative arrangements of the 2 subdomains of the HKC may control not only kinase activity but exposure of the ATP binding site (PubMed:23486471).</text>
</comment>
<comment type="disruption phenotype">
    <text evidence="3 5 11 12 16">Cells lacking this gene show no changes in gene induction following hypoxia, or exposure to NO or CO (PubMed:11416222, PubMed:15033981, PubMed:18474359). Another publication shows a severely attenuated response to CO (PubMed:18400743). Cells lacking both this gene and DosT have no response to hypoxia, or exposure to NO or CO showing both proteins are required for the hypoxic, NO and CO responses (PubMed:15033981). 95% decreased induction of the DevR (DosR) regulon during anaerobic growth, 50% decreased induction of the DevR regulon upon exposure to NO during aerobic growth (PubMed:19487478).</text>
</comment>
<comment type="miscellaneous">
    <text evidence="28">Was identified as a high-confidence drug target.</text>
</comment>
<comment type="miscellaneous">
    <text evidence="13 29 32">A tyrosine residue (Tyr-171) is required for discrimination between bound gaseous ligands (PubMed:18975917). The Tyr is part of a probable hydrogen bonding network which includes Glu-87, His-89 and Arg-204 that is probably also important for signaling to the kinase domain (PubMed:19276084, PubMed:27235395).</text>
</comment>
<comment type="miscellaneous">
    <text evidence="31">The dev nomenclature derives from the increased expression (differentially expressed in virulent strain, dev) of these genes in virulent H37Rv versus avirulent H37Ra. The dos nomenclature derives from experiments in M.bovis showing the same genes are essential for dormancy survival.</text>
</comment>
<accession>P9WGK3</accession>
<accession>L0TBM4</accession>
<accession>P95194</accession>
<accession>Q79CX7</accession>
<accession>Q7D626</accession>
<organism>
    <name type="scientific">Mycobacterium tuberculosis (strain ATCC 25618 / H37Rv)</name>
    <dbReference type="NCBI Taxonomy" id="83332"/>
    <lineage>
        <taxon>Bacteria</taxon>
        <taxon>Bacillati</taxon>
        <taxon>Actinomycetota</taxon>
        <taxon>Actinomycetes</taxon>
        <taxon>Mycobacteriales</taxon>
        <taxon>Mycobacteriaceae</taxon>
        <taxon>Mycobacterium</taxon>
        <taxon>Mycobacterium tuberculosis complex</taxon>
    </lineage>
</organism>
<feature type="initiator methionine" description="Removed" evidence="43">
    <location>
        <position position="1"/>
    </location>
</feature>
<feature type="chain" id="PRO_0000392623" description="Oxygen sensor histidine kinase response regulator DevS/DosS">
    <location>
        <begin position="2"/>
        <end position="578"/>
    </location>
</feature>
<feature type="domain" description="GAF 1">
    <location>
        <begin position="63"/>
        <end position="200"/>
    </location>
</feature>
<feature type="domain" description="GAF 2">
    <location>
        <begin position="231"/>
        <end position="369"/>
    </location>
</feature>
<feature type="domain" description="Histidine kinase" evidence="1">
    <location>
        <begin position="383"/>
        <end position="578"/>
    </location>
</feature>
<feature type="region of interest" description="Histidine acceptor domain" evidence="30">
    <location>
        <begin position="386"/>
        <end position="452"/>
    </location>
</feature>
<feature type="region of interest" description="ATP-binding domain" evidence="30">
    <location>
        <begin position="454"/>
        <end position="578"/>
    </location>
</feature>
<feature type="binding site" description="axial binding residue" evidence="14 17 20">
    <location>
        <position position="149"/>
    </location>
    <ligand>
        <name>heme</name>
        <dbReference type="ChEBI" id="CHEBI:30413"/>
    </ligand>
    <ligandPart>
        <name>Fe</name>
        <dbReference type="ChEBI" id="CHEBI:18248"/>
    </ligandPart>
</feature>
<feature type="modified residue" description="N-acetylthreonine" evidence="43">
    <location>
        <position position="2"/>
    </location>
</feature>
<feature type="modified residue" description="Phosphohistidine; by autocatalysis" evidence="24 25">
    <location>
        <position position="395"/>
    </location>
</feature>
<feature type="mutagenesis site" description="No change in autophosphorylation when NO-bound, decreased autophosphorylation in deoxy or CO-bound state, slightly increased activity in O(2)-bound state." evidence="19">
    <original>E</original>
    <variation>A</variation>
    <location>
        <position position="87"/>
    </location>
</feature>
<feature type="mutagenesis site" description="No change in autophosphorylation when NO-bound, loss of autophosphorylation in deoxy or CO-bound state." evidence="19">
    <original>E</original>
    <variation>D</variation>
    <location>
        <position position="87"/>
    </location>
</feature>
<feature type="mutagenesis site" description="No change in autophosphorylation when deoxy or NO-bound, decreased autophosphorylation when CO-bound, increased activity in O(2)-bound state." evidence="19">
    <original>E</original>
    <variation>G</variation>
    <location>
        <position position="87"/>
    </location>
</feature>
<feature type="mutagenesis site" description="No autophosphorylation activity no matter the bound gaseous ligand, protein more easily oxidized to Fe(3+) state." evidence="19">
    <original>H</original>
    <variation>A</variation>
    <location>
        <position position="89"/>
    </location>
</feature>
<feature type="mutagenesis site" description="Decreased autophosphorylation when CO- or NO-bound, none in the deoxy or O(2)-bound state, protein more easily oxidized to Fe(3+) state." evidence="19">
    <original>H</original>
    <variation>R</variation>
    <location>
        <position position="89"/>
    </location>
</feature>
<feature type="mutagenesis site" description="No change in heme binding." evidence="7">
    <original>H</original>
    <variation>A</variation>
    <location>
        <position position="139"/>
    </location>
</feature>
<feature type="mutagenesis site" description="Weaker than wild-type heme binding." evidence="7 8">
    <original>H</original>
    <variation>A</variation>
    <location>
        <position position="149"/>
    </location>
</feature>
<feature type="mutagenesis site" description="No autophosphorylation when Fe(2+) protein is bound to CO or NO; no change in autophosphorylation of deoxy-protein. No change in auto-oxidation, slightly higher affinity for O(2) and CO." evidence="13 15">
    <original>Y</original>
    <variation>F</variation>
    <location>
        <position position="171"/>
    </location>
</feature>
<feature type="mutagenesis site" description="No autophosphorylation activity no matter the bound gaseous ligand." evidence="19">
    <original>R</original>
    <variation>A</variation>
    <location>
        <position position="204"/>
    </location>
</feature>
<feature type="mutagenesis site" description="No autophosphorylation, no transfer to DevR (DosR)." evidence="5">
    <original>HDH</original>
    <variation>KDK</variation>
    <location>
        <begin position="395"/>
        <end position="397"/>
    </location>
</feature>
<feature type="mutagenesis site" description="No autophosphorylation. Isolated kinase core binds ATP." evidence="6 18">
    <original>H</original>
    <variation>Q</variation>
    <location>
        <position position="395"/>
    </location>
</feature>
<feature type="mutagenesis site" description="No change in phosphorylation." evidence="6">
    <original>H</original>
    <variation>A</variation>
    <variation>Q</variation>
    <location>
        <position position="397"/>
    </location>
</feature>
<feature type="mutagenesis site" description="Can form a disulfide bond; when associated with C-537. Loss of autophosphorylation; when associated with C-524 or C-524 and C-537." evidence="18">
    <original>R</original>
    <variation>C</variation>
    <location>
        <position position="440"/>
    </location>
</feature>
<feature type="mutagenesis site" description="No autophosphorylation." evidence="6">
    <original>N</original>
    <variation>D</variation>
    <location>
        <position position="503"/>
    </location>
</feature>
<feature type="mutagenesis site" description="Isolated kinase core no longer forms dimers, autophosphorylation unaffected. Decreased autophosphorylation; when associated with C-537. Loss of autophosphorylation; when associated with C-440 or C-440 and C-537." evidence="18">
    <original>C</original>
    <variation>S</variation>
    <location>
        <position position="524"/>
    </location>
</feature>
<feature type="mutagenesis site" description="Can form a disulfide bond; when associated with C-440. Decreased autophosphorylation; when associated with C-524. Loss of autophosphorylation; when associated with C-440 or C-440 and C-524." evidence="18">
    <original>E</original>
    <variation>C</variation>
    <location>
        <position position="537"/>
    </location>
</feature>
<feature type="helix" evidence="45">
    <location>
        <begin position="63"/>
        <end position="78"/>
    </location>
</feature>
<feature type="strand" evidence="45">
    <location>
        <begin position="81"/>
        <end position="89"/>
    </location>
</feature>
<feature type="helix" evidence="44">
    <location>
        <begin position="91"/>
        <end position="93"/>
    </location>
</feature>
<feature type="strand" evidence="45">
    <location>
        <begin position="95"/>
        <end position="102"/>
    </location>
</feature>
<feature type="helix" evidence="45">
    <location>
        <begin position="105"/>
        <end position="111"/>
    </location>
</feature>
<feature type="helix" evidence="45">
    <location>
        <begin position="120"/>
        <end position="126"/>
    </location>
</feature>
<feature type="strand" evidence="45">
    <location>
        <begin position="131"/>
        <end position="135"/>
    </location>
</feature>
<feature type="helix" evidence="45">
    <location>
        <begin position="136"/>
        <end position="138"/>
    </location>
</feature>
<feature type="strand" evidence="45">
    <location>
        <begin position="155"/>
        <end position="162"/>
    </location>
</feature>
<feature type="strand" evidence="45">
    <location>
        <begin position="165"/>
        <end position="175"/>
    </location>
</feature>
<feature type="helix" evidence="45">
    <location>
        <begin position="183"/>
        <end position="206"/>
    </location>
</feature>
<feature type="helix" evidence="47">
    <location>
        <begin position="456"/>
        <end position="467"/>
    </location>
</feature>
<feature type="strand" evidence="47">
    <location>
        <begin position="472"/>
        <end position="480"/>
    </location>
</feature>
<feature type="helix" evidence="47">
    <location>
        <begin position="482"/>
        <end position="484"/>
    </location>
</feature>
<feature type="helix" evidence="47">
    <location>
        <begin position="487"/>
        <end position="502"/>
    </location>
</feature>
<feature type="strand" evidence="47">
    <location>
        <begin position="512"/>
        <end position="529"/>
    </location>
</feature>
<feature type="turn" evidence="47">
    <location>
        <begin position="535"/>
        <end position="538"/>
    </location>
</feature>
<feature type="helix" evidence="47">
    <location>
        <begin position="541"/>
        <end position="552"/>
    </location>
</feature>
<feature type="strand" evidence="47">
    <location>
        <begin position="556"/>
        <end position="560"/>
    </location>
</feature>
<feature type="turn" evidence="46">
    <location>
        <begin position="563"/>
        <end position="565"/>
    </location>
</feature>
<feature type="strand" evidence="47">
    <location>
        <begin position="568"/>
        <end position="575"/>
    </location>
</feature>
<name>DEVS_MYCTU</name>
<gene>
    <name evidence="22" type="primary">devS</name>
    <name type="synonym">dosS</name>
    <name type="ordered locus">Rv3132c</name>
</gene>